<sequence length="1430" mass="161486">MKDWENIFSQSHIIPPHKQRCKHAPSEKAGYQICIETLEGTPFRQGVLERSVEVSCQLRMTLFDSTYHHFFGRTWKSSTKPIKAIPGKASKILFNEPIYFYTTLIDPSIMAVIEVVALSKKQGGSKQELSCGFGIMSLFSHQLEDDSSIQSGRLKLYYGTPRSLLHPTLKDPNELNQHMTLIENTCIQYSVRPHKVLPTVAHLFPENVLVSGSETIPGIMPSCDNSGDALKKPHVQKTVICYLDQICLFLYPTLEKFEEELTMLVNSDWLPKDDGNINGGSVSIQERRLHIGVHNGWVFVQKPQIVVVVPEAEMMRGHSTTSLKKKNIAQQKLSSTVQALVLRSRIRLPEMVNHHGFALVFLLEYVFSIPNGIHSKTPSAASSTSYMHMIRWASWTPSMEQGSADVALPLQGGPHHNPSNNLVYKMPPANMSSEEVQQVESGTVHFTFCAGSENQLEKTRDFAETTSKELIQSKKNVKMSNSKLVPETTFSPLESQVGPALSISQLTTSPRYPAISHSSKTAMQYIPSQLLPSPMAYQLSHAELPYASSITHLEADMSESHPNNSNGEHLQELLFSPVHAPIVAMGTQTGSTTSLLSRASLARLHSVEFPEILDCNNEVAEVVDPSNPVNFNLQREEADYLLCNEIVLQFLAFTRIHDGSTIWPESIFFTFQFYRFHHVTTPRLQLLQLESSDIATADPLTHVLVQINKDGSIKKGSPGFQIKYSVDPGFLKPGERKWFLRFLALQTLQIDIWDGESLLLIGSAAVEMKHLLRQGRTAVQVSHDLEVITTEYEQDLMVMSGDTAKQGTAKPIGVHTIIKGRLHMRMGNVGRPPEKKLKRRETLPPSNSRIITMHDGRTGFHGGSMLSNKSMNWKQSVCQAHKLADLDSELAAMLCSRMKEVSIAYQQTNSETDTTERRKKERMMAVRQQESQENANLRKSLIMAQHEERTQHTRDLQIIEAYRERTKPECISSMLNQAITSNYTVYATLGTAEFFEFELKNPYNIQYTVTIEIDSTDLRVITDTREWKHFKELTSTVTPIEENMFHVQPNTVIPQLYLRAKETVYIPFKYQTFCVDHTPMLQGPDAESLRKHSQLSQYKSNAMSSRRIKVSFKTSDGKLIAILQVNIEPQPHVVDQTFRFYHPELTFLKKSIRLPPWYTLPGAPVGTPGGEPDLQVRCSDINIICDSKKMGPGEPQDVFIKVAGGPSPQIKRFFIALYIDPWLAAPIQIWQIYVHSLKRVDVSCITGQLTQLSLVLRGTQVVRKVRAYSSHPEELKVDPDGVFVLPPNGIQDLHIGVRPQKAGSQFIYLNLVDVDQHQLVASWLVCVSCRKPVISKAFEIALPVGGEKGCNKRISYRNPYPTKKTYSLYTNRSDLLQFKENYFEVAAGETYSIGLRFAPSQTRGQEEILIFINDREDKNEETFCVKVRYE</sequence>
<reference key="1">
    <citation type="journal article" date="2015" name="J. Cell Biol.">
        <title>The polarity protein Inturned links NPHP4 to Daam1 to control the subapical actin network in multiciliated cells.</title>
        <authorList>
            <person name="Yasunaga T."/>
            <person name="Hoff S."/>
            <person name="Schell C."/>
            <person name="Helmstaedter M."/>
            <person name="Kretz O."/>
            <person name="Kuechlin S."/>
            <person name="Yakulov T.A."/>
            <person name="Engel C."/>
            <person name="Mueller B."/>
            <person name="Bensch R."/>
            <person name="Ronneberger O."/>
            <person name="Huber T.B."/>
            <person name="Lienkamp S.S."/>
            <person name="Walz G."/>
        </authorList>
    </citation>
    <scope>NUCLEOTIDE SEQUENCE [MRNA]</scope>
    <scope>FUNCTION</scope>
    <scope>SUBCELLULAR LOCATION</scope>
    <scope>DEVELOPMENTAL STAGE</scope>
</reference>
<organism>
    <name type="scientific">Xenopus laevis</name>
    <name type="common">African clawed frog</name>
    <dbReference type="NCBI Taxonomy" id="8355"/>
    <lineage>
        <taxon>Eukaryota</taxon>
        <taxon>Metazoa</taxon>
        <taxon>Chordata</taxon>
        <taxon>Craniata</taxon>
        <taxon>Vertebrata</taxon>
        <taxon>Euteleostomi</taxon>
        <taxon>Amphibia</taxon>
        <taxon>Batrachia</taxon>
        <taxon>Anura</taxon>
        <taxon>Pipoidea</taxon>
        <taxon>Pipidae</taxon>
        <taxon>Xenopodinae</taxon>
        <taxon>Xenopus</taxon>
        <taxon>Xenopus</taxon>
    </lineage>
</organism>
<proteinExistence type="evidence at transcript level"/>
<protein>
    <recommendedName>
        <fullName>Nephrocystin-4</fullName>
    </recommendedName>
</protein>
<dbReference type="Proteomes" id="UP000186698">
    <property type="component" value="Unplaced"/>
</dbReference>
<dbReference type="GO" id="GO:0036064">
    <property type="term" value="C:ciliary basal body"/>
    <property type="evidence" value="ECO:0000318"/>
    <property type="project" value="GO_Central"/>
</dbReference>
<dbReference type="GO" id="GO:0097546">
    <property type="term" value="C:ciliary base"/>
    <property type="evidence" value="ECO:0000318"/>
    <property type="project" value="GO_Central"/>
</dbReference>
<dbReference type="GO" id="GO:0035869">
    <property type="term" value="C:ciliary transition zone"/>
    <property type="evidence" value="ECO:0000318"/>
    <property type="project" value="GO_Central"/>
</dbReference>
<dbReference type="GO" id="GO:0005737">
    <property type="term" value="C:cytoplasm"/>
    <property type="evidence" value="ECO:0007669"/>
    <property type="project" value="UniProtKB-KW"/>
</dbReference>
<dbReference type="GO" id="GO:0097730">
    <property type="term" value="C:non-motile cilium"/>
    <property type="evidence" value="ECO:0000318"/>
    <property type="project" value="GO_Central"/>
</dbReference>
<dbReference type="GO" id="GO:0090090">
    <property type="term" value="P:negative regulation of canonical Wnt signaling pathway"/>
    <property type="evidence" value="ECO:0000318"/>
    <property type="project" value="GO_Central"/>
</dbReference>
<dbReference type="GO" id="GO:1904491">
    <property type="term" value="P:protein localization to ciliary transition zone"/>
    <property type="evidence" value="ECO:0000318"/>
    <property type="project" value="GO_Central"/>
</dbReference>
<dbReference type="CDD" id="cd22239">
    <property type="entry name" value="NPHP4"/>
    <property type="match status" value="1"/>
</dbReference>
<dbReference type="InterPro" id="IPR029775">
    <property type="entry name" value="NPHP4"/>
</dbReference>
<dbReference type="PANTHER" id="PTHR31043">
    <property type="entry name" value="NEPHROCYSTIN-4"/>
    <property type="match status" value="1"/>
</dbReference>
<dbReference type="PANTHER" id="PTHR31043:SF3">
    <property type="entry name" value="NEPHROCYSTIN-4"/>
    <property type="match status" value="1"/>
</dbReference>
<accession>B0DOB4</accession>
<feature type="chain" id="PRO_0000437575" description="Nephrocystin-4">
    <location>
        <begin position="1"/>
        <end position="1430"/>
    </location>
</feature>
<feature type="region of interest" description="Sufficient for basal bodies localization" evidence="1">
    <location>
        <begin position="824"/>
        <end position="1430"/>
    </location>
</feature>
<feature type="region of interest" description="Disordered" evidence="3">
    <location>
        <begin position="828"/>
        <end position="857"/>
    </location>
</feature>
<gene>
    <name type="primary">nphp4</name>
</gene>
<evidence type="ECO:0000250" key="1">
    <source>
        <dbReference type="UniProtKB" id="O75161"/>
    </source>
</evidence>
<evidence type="ECO:0000250" key="2">
    <source>
        <dbReference type="UniProtKB" id="P59240"/>
    </source>
</evidence>
<evidence type="ECO:0000256" key="3">
    <source>
        <dbReference type="SAM" id="MobiDB-lite"/>
    </source>
</evidence>
<evidence type="ECO:0000269" key="4">
    <source>
    </source>
</evidence>
<evidence type="ECO:0000305" key="5"/>
<keyword id="KW-0966">Cell projection</keyword>
<keyword id="KW-0963">Cytoplasm</keyword>
<keyword id="KW-0206">Cytoskeleton</keyword>
<keyword id="KW-1185">Reference proteome</keyword>
<comment type="function">
    <text evidence="1 2 4">Involved in the organization of apical junctions (By similarity). Required for building functional cilia. Involved in the organization of the subapical actin network in multiciliated epithelial cells. Seems to recruit int to basal bodies of motile cilia which subsequently interacts with actin-modifying proteins such as daam1 (PubMed:26644512). May down-regulate the canonical Wnt pathway and promote the Wnt-PCP pathway. Acts as a negative regulator of the hippo pathway (By similarity).</text>
</comment>
<comment type="subcellular location">
    <subcellularLocation>
        <location evidence="4">Cytoplasm</location>
        <location evidence="4">Cytoskeleton</location>
        <location evidence="4">Cilium basal body</location>
    </subcellularLocation>
</comment>
<comment type="developmental stage">
    <text evidence="4">In the embryo expressed in the neural folds and the presumptive eye at stage 18. At stage 24 expressed in multiciliated cells of the epidermis. Also detected in the brain, spinal code, eye, olfactory placode, and cloaca. At stage 32 expressed in the pronephric duct, nephrostrome, cloaca, somites, posterior spinal cord, eye, branchial arch, otic vesicle, and fore-, mid-, and hindbrain.</text>
</comment>
<comment type="similarity">
    <text evidence="5">Belongs to the NPHP4 family.</text>
</comment>
<name>NPHP4_XENLA</name>